<name>LPTD_SALCH</name>
<feature type="signal peptide" evidence="1">
    <location>
        <begin position="1"/>
        <end position="24"/>
    </location>
</feature>
<feature type="chain" id="PRO_0000020286" description="LPS-assembly protein LptD">
    <location>
        <begin position="25"/>
        <end position="786"/>
    </location>
</feature>
<feature type="disulfide bond" evidence="1">
    <location>
        <begin position="31"/>
        <end position="726"/>
    </location>
</feature>
<feature type="disulfide bond" evidence="1">
    <location>
        <begin position="173"/>
        <end position="727"/>
    </location>
</feature>
<keyword id="KW-0998">Cell outer membrane</keyword>
<keyword id="KW-1015">Disulfide bond</keyword>
<keyword id="KW-0472">Membrane</keyword>
<keyword id="KW-0732">Signal</keyword>
<gene>
    <name evidence="1" type="primary">lptD</name>
    <name type="synonym">imp</name>
    <name type="synonym">ostA</name>
    <name type="ordered locus">SCH_0088</name>
</gene>
<protein>
    <recommendedName>
        <fullName evidence="1">LPS-assembly protein LptD</fullName>
    </recommendedName>
</protein>
<dbReference type="EMBL" id="AE017220">
    <property type="protein sequence ID" value="AAX63994.1"/>
    <property type="molecule type" value="Genomic_DNA"/>
</dbReference>
<dbReference type="RefSeq" id="WP_011264183.1">
    <property type="nucleotide sequence ID" value="NC_006905.1"/>
</dbReference>
<dbReference type="SMR" id="Q57TG7"/>
<dbReference type="KEGG" id="sec:SCH_0088"/>
<dbReference type="HOGENOM" id="CLU_009039_2_0_6"/>
<dbReference type="Proteomes" id="UP000000538">
    <property type="component" value="Chromosome"/>
</dbReference>
<dbReference type="GO" id="GO:0009279">
    <property type="term" value="C:cell outer membrane"/>
    <property type="evidence" value="ECO:0007669"/>
    <property type="project" value="UniProtKB-SubCell"/>
</dbReference>
<dbReference type="GO" id="GO:1990351">
    <property type="term" value="C:transporter complex"/>
    <property type="evidence" value="ECO:0007669"/>
    <property type="project" value="TreeGrafter"/>
</dbReference>
<dbReference type="GO" id="GO:0043165">
    <property type="term" value="P:Gram-negative-bacterium-type cell outer membrane assembly"/>
    <property type="evidence" value="ECO:0007669"/>
    <property type="project" value="UniProtKB-UniRule"/>
</dbReference>
<dbReference type="GO" id="GO:0015920">
    <property type="term" value="P:lipopolysaccharide transport"/>
    <property type="evidence" value="ECO:0007669"/>
    <property type="project" value="InterPro"/>
</dbReference>
<dbReference type="FunFam" id="2.60.450.10:FF:000003">
    <property type="entry name" value="LPS-assembly protein LptD"/>
    <property type="match status" value="1"/>
</dbReference>
<dbReference type="Gene3D" id="2.60.450.10">
    <property type="entry name" value="Lipopolysaccharide (LPS) transport protein A like domain"/>
    <property type="match status" value="1"/>
</dbReference>
<dbReference type="HAMAP" id="MF_01411">
    <property type="entry name" value="LPS_assembly_LptD"/>
    <property type="match status" value="1"/>
</dbReference>
<dbReference type="InterPro" id="IPR020889">
    <property type="entry name" value="LipoPS_assembly_LptD"/>
</dbReference>
<dbReference type="InterPro" id="IPR050218">
    <property type="entry name" value="LptD"/>
</dbReference>
<dbReference type="InterPro" id="IPR007543">
    <property type="entry name" value="LptD_C"/>
</dbReference>
<dbReference type="InterPro" id="IPR005653">
    <property type="entry name" value="OstA-like_N"/>
</dbReference>
<dbReference type="NCBIfam" id="NF002997">
    <property type="entry name" value="PRK03761.1"/>
    <property type="match status" value="1"/>
</dbReference>
<dbReference type="PANTHER" id="PTHR30189">
    <property type="entry name" value="LPS-ASSEMBLY PROTEIN"/>
    <property type="match status" value="1"/>
</dbReference>
<dbReference type="PANTHER" id="PTHR30189:SF1">
    <property type="entry name" value="LPS-ASSEMBLY PROTEIN LPTD"/>
    <property type="match status" value="1"/>
</dbReference>
<dbReference type="Pfam" id="PF04453">
    <property type="entry name" value="LptD"/>
    <property type="match status" value="1"/>
</dbReference>
<dbReference type="Pfam" id="PF03968">
    <property type="entry name" value="LptD_N"/>
    <property type="match status" value="1"/>
</dbReference>
<organism>
    <name type="scientific">Salmonella choleraesuis (strain SC-B67)</name>
    <dbReference type="NCBI Taxonomy" id="321314"/>
    <lineage>
        <taxon>Bacteria</taxon>
        <taxon>Pseudomonadati</taxon>
        <taxon>Pseudomonadota</taxon>
        <taxon>Gammaproteobacteria</taxon>
        <taxon>Enterobacterales</taxon>
        <taxon>Enterobacteriaceae</taxon>
        <taxon>Salmonella</taxon>
    </lineage>
</organism>
<sequence length="786" mass="89843">MKKRIPTLLATMIASALYSHQGLAADLASQCMLGVPSYDRPLVKGDTNDLPVTINADNAKGNYPNDAVFTGNVDIMQGNSRLQADEVQLHQKQAEGQPEPVRTVDALGNVHYDDNQVILKGPKGWANLNTKDTNVWEGDYQMVGRQGRGKADLMKQRGENRYTILENGSFTSCLPGSDTWSVVGSEVIHDREEQVAEIWNARFKVGPVPIFYSPYLQLPVGDKRRSGFLIPNAKYTTKNYFEFYLPYYWNIAPNMDATITPHYMHRRGNIMWENEFRYLTQAGAGLMELDYLPSDKVYEDDHPKEGDKHRWLFYWQHSGVMDQVWRFNVDYTKVSDSSYFNDFDSKYGSSTDGYATQKFSVGYAVQNFDATVSTKQFQVFNDQNTSSYSAEPQLDVNYYHNDLGPFDTRIYGQAVHFVNTKDNMPEATRVHLEPTINLPLSNRWGSLNTEAKLMATHYQQTNLDSYNSDPNNKNKLEDSVNRVMPQFKVDGKLIFERDMAMLAPGYTQTLEPRVQYLYVPYRDQSGIYNYDSSLLQSDYNGLFRDRTYGGLDRIASANQVTTGVTTRIYDDAAVERFNVSVGQIYYFTESRTGDDNIKWENDDKTGSLVWAGDTYWRISERWGLRSGVQYDTRLDSVATSSSSLEYRRDQDRLVQLNYRYASPEYIQATLPSYYSTAEQYKNGINQVGAVASWLIADRWSIVGAYYFDTNSSKPADQMLGLQYNSCCYAIRVGYERKLNGWDNDKQHAIYDNAIGFNIELRGLSSNYGLGTQEMLRSNILPYQSSM</sequence>
<accession>Q57TG7</accession>
<proteinExistence type="inferred from homology"/>
<evidence type="ECO:0000255" key="1">
    <source>
        <dbReference type="HAMAP-Rule" id="MF_01411"/>
    </source>
</evidence>
<comment type="function">
    <text evidence="1">Together with LptE, is involved in the assembly of lipopolysaccharide (LPS) at the surface of the outer membrane.</text>
</comment>
<comment type="subunit">
    <text evidence="1">Component of the lipopolysaccharide transport and assembly complex. Interacts with LptE and LptA.</text>
</comment>
<comment type="subcellular location">
    <subcellularLocation>
        <location evidence="1">Cell outer membrane</location>
    </subcellularLocation>
</comment>
<comment type="PTM">
    <text evidence="1">Contains two intramolecular disulfide bonds.</text>
</comment>
<comment type="similarity">
    <text evidence="1">Belongs to the LptD family.</text>
</comment>
<reference key="1">
    <citation type="journal article" date="2005" name="Nucleic Acids Res.">
        <title>The genome sequence of Salmonella enterica serovar Choleraesuis, a highly invasive and resistant zoonotic pathogen.</title>
        <authorList>
            <person name="Chiu C.-H."/>
            <person name="Tang P."/>
            <person name="Chu C."/>
            <person name="Hu S."/>
            <person name="Bao Q."/>
            <person name="Yu J."/>
            <person name="Chou Y.-Y."/>
            <person name="Wang H.-S."/>
            <person name="Lee Y.-S."/>
        </authorList>
    </citation>
    <scope>NUCLEOTIDE SEQUENCE [LARGE SCALE GENOMIC DNA]</scope>
    <source>
        <strain>SC-B67</strain>
    </source>
</reference>